<keyword id="KW-0217">Developmental protein</keyword>
<keyword id="KW-0238">DNA-binding</keyword>
<keyword id="KW-0371">Homeobox</keyword>
<keyword id="KW-0539">Nucleus</keyword>
<evidence type="ECO:0000255" key="1">
    <source>
        <dbReference type="PROSITE-ProRule" id="PRU00108"/>
    </source>
</evidence>
<evidence type="ECO:0000256" key="2">
    <source>
        <dbReference type="SAM" id="MobiDB-lite"/>
    </source>
</evidence>
<evidence type="ECO:0000305" key="3"/>
<proteinExistence type="evidence at transcript level"/>
<protein>
    <recommendedName>
        <fullName>Segmentation polarity homeobox protein engrailed</fullName>
        <shortName>G-EN</shortName>
    </recommendedName>
</protein>
<organism>
    <name type="scientific">Schistocerca americana</name>
    <name type="common">American grasshopper</name>
    <dbReference type="NCBI Taxonomy" id="7009"/>
    <lineage>
        <taxon>Eukaryota</taxon>
        <taxon>Metazoa</taxon>
        <taxon>Ecdysozoa</taxon>
        <taxon>Arthropoda</taxon>
        <taxon>Hexapoda</taxon>
        <taxon>Insecta</taxon>
        <taxon>Pterygota</taxon>
        <taxon>Neoptera</taxon>
        <taxon>Polyneoptera</taxon>
        <taxon>Orthoptera</taxon>
        <taxon>Caelifera</taxon>
        <taxon>Acrididea</taxon>
        <taxon>Acridomorpha</taxon>
        <taxon>Acridoidea</taxon>
        <taxon>Acrididae</taxon>
        <taxon>Cyrtacanthacridinae</taxon>
        <taxon>Schistocerca</taxon>
    </lineage>
</organism>
<gene>
    <name type="primary">en</name>
</gene>
<sequence length="93" mass="11188">LWPAWVYCTRYSDGPSSGRSPRSRRLKRNKKPEEKRPRTAFSGEQLARLKHEFTENRYLTERRRQELARELGLNEAQIKIWFQNKRAKIKKAS</sequence>
<dbReference type="EMBL" id="M29262">
    <property type="protein sequence ID" value="AAA29807.1"/>
    <property type="molecule type" value="mRNA"/>
</dbReference>
<dbReference type="PIR" id="A32994">
    <property type="entry name" value="A32994"/>
</dbReference>
<dbReference type="SMR" id="P14150"/>
<dbReference type="OrthoDB" id="6159439at2759"/>
<dbReference type="GO" id="GO:0005634">
    <property type="term" value="C:nucleus"/>
    <property type="evidence" value="ECO:0007669"/>
    <property type="project" value="UniProtKB-SubCell"/>
</dbReference>
<dbReference type="GO" id="GO:0000981">
    <property type="term" value="F:DNA-binding transcription factor activity, RNA polymerase II-specific"/>
    <property type="evidence" value="ECO:0007669"/>
    <property type="project" value="InterPro"/>
</dbReference>
<dbReference type="GO" id="GO:0000978">
    <property type="term" value="F:RNA polymerase II cis-regulatory region sequence-specific DNA binding"/>
    <property type="evidence" value="ECO:0007669"/>
    <property type="project" value="TreeGrafter"/>
</dbReference>
<dbReference type="GO" id="GO:0030182">
    <property type="term" value="P:neuron differentiation"/>
    <property type="evidence" value="ECO:0007669"/>
    <property type="project" value="TreeGrafter"/>
</dbReference>
<dbReference type="CDD" id="cd00086">
    <property type="entry name" value="homeodomain"/>
    <property type="match status" value="1"/>
</dbReference>
<dbReference type="FunFam" id="1.10.10.60:FF:000189">
    <property type="entry name" value="Homeobox protein engrailed-like"/>
    <property type="match status" value="1"/>
</dbReference>
<dbReference type="Gene3D" id="1.10.10.60">
    <property type="entry name" value="Homeodomain-like"/>
    <property type="match status" value="1"/>
</dbReference>
<dbReference type="InterPro" id="IPR050720">
    <property type="entry name" value="Engrailed_Homeobox_TFs"/>
</dbReference>
<dbReference type="InterPro" id="IPR001356">
    <property type="entry name" value="HD"/>
</dbReference>
<dbReference type="InterPro" id="IPR020479">
    <property type="entry name" value="HD_metazoa"/>
</dbReference>
<dbReference type="InterPro" id="IPR017970">
    <property type="entry name" value="Homeobox_CS"/>
</dbReference>
<dbReference type="InterPro" id="IPR009057">
    <property type="entry name" value="Homeodomain-like_sf"/>
</dbReference>
<dbReference type="InterPro" id="IPR000047">
    <property type="entry name" value="HTH_motif"/>
</dbReference>
<dbReference type="PANTHER" id="PTHR24341">
    <property type="entry name" value="HOMEOBOX PROTEIN ENGRAILED"/>
    <property type="match status" value="1"/>
</dbReference>
<dbReference type="PANTHER" id="PTHR24341:SF6">
    <property type="entry name" value="HOMEOBOX PROTEIN INVECTED"/>
    <property type="match status" value="1"/>
</dbReference>
<dbReference type="Pfam" id="PF00046">
    <property type="entry name" value="Homeodomain"/>
    <property type="match status" value="1"/>
</dbReference>
<dbReference type="PRINTS" id="PR00024">
    <property type="entry name" value="HOMEOBOX"/>
</dbReference>
<dbReference type="PRINTS" id="PR00031">
    <property type="entry name" value="HTHREPRESSR"/>
</dbReference>
<dbReference type="SMART" id="SM00389">
    <property type="entry name" value="HOX"/>
    <property type="match status" value="1"/>
</dbReference>
<dbReference type="SUPFAM" id="SSF46689">
    <property type="entry name" value="Homeodomain-like"/>
    <property type="match status" value="1"/>
</dbReference>
<dbReference type="PROSITE" id="PS00027">
    <property type="entry name" value="HOMEOBOX_1"/>
    <property type="match status" value="1"/>
</dbReference>
<dbReference type="PROSITE" id="PS50071">
    <property type="entry name" value="HOMEOBOX_2"/>
    <property type="match status" value="1"/>
</dbReference>
<accession>P14150</accession>
<comment type="subcellular location">
    <subcellularLocation>
        <location evidence="3">Nucleus</location>
    </subcellularLocation>
</comment>
<comment type="similarity">
    <text evidence="3">Belongs to the engrailed homeobox family.</text>
</comment>
<feature type="chain" id="PRO_0000196079" description="Segmentation polarity homeobox protein engrailed">
    <location>
        <begin position="1" status="less than"/>
        <end position="93" status="greater than"/>
    </location>
</feature>
<feature type="DNA-binding region" description="Homeobox" evidence="1">
    <location>
        <begin position="34"/>
        <end position="93"/>
    </location>
</feature>
<feature type="region of interest" description="Disordered" evidence="2">
    <location>
        <begin position="12"/>
        <end position="41"/>
    </location>
</feature>
<feature type="compositionally biased region" description="Basic residues" evidence="2">
    <location>
        <begin position="21"/>
        <end position="30"/>
    </location>
</feature>
<feature type="non-terminal residue">
    <location>
        <position position="1"/>
    </location>
</feature>
<feature type="non-terminal residue">
    <location>
        <position position="93"/>
    </location>
</feature>
<name>HMEN_SCHAM</name>
<reference key="1">
    <citation type="journal article" date="1989" name="Cell">
        <title>Expression of engrailed proteins in arthropods, annelids, and chordates.</title>
        <authorList>
            <person name="Patel N.H."/>
            <person name="Martin-Blanco E."/>
            <person name="Coleman K.G."/>
            <person name="Poole S.J."/>
            <person name="Ellis M.C."/>
            <person name="Kornberg T.B."/>
            <person name="Goodman C.S."/>
        </authorList>
    </citation>
    <scope>NUCLEOTIDE SEQUENCE [MRNA]</scope>
</reference>